<accession>Q1GYY7</accession>
<protein>
    <recommendedName>
        <fullName evidence="1">UPF0102 protein Mfla_2283</fullName>
    </recommendedName>
</protein>
<name>Y2283_METFK</name>
<evidence type="ECO:0000255" key="1">
    <source>
        <dbReference type="HAMAP-Rule" id="MF_00048"/>
    </source>
</evidence>
<organism>
    <name type="scientific">Methylobacillus flagellatus (strain ATCC 51484 / DSM 6875 / VKM B-1610 / KT)</name>
    <dbReference type="NCBI Taxonomy" id="265072"/>
    <lineage>
        <taxon>Bacteria</taxon>
        <taxon>Pseudomonadati</taxon>
        <taxon>Pseudomonadota</taxon>
        <taxon>Betaproteobacteria</taxon>
        <taxon>Nitrosomonadales</taxon>
        <taxon>Methylophilaceae</taxon>
        <taxon>Methylobacillus</taxon>
    </lineage>
</organism>
<dbReference type="EMBL" id="CP000284">
    <property type="protein sequence ID" value="ABE50550.1"/>
    <property type="molecule type" value="Genomic_DNA"/>
</dbReference>
<dbReference type="RefSeq" id="WP_011480504.1">
    <property type="nucleotide sequence ID" value="NC_007947.1"/>
</dbReference>
<dbReference type="SMR" id="Q1GYY7"/>
<dbReference type="STRING" id="265072.Mfla_2283"/>
<dbReference type="KEGG" id="mfa:Mfla_2283"/>
<dbReference type="eggNOG" id="COG0792">
    <property type="taxonomic scope" value="Bacteria"/>
</dbReference>
<dbReference type="HOGENOM" id="CLU_115353_1_0_4"/>
<dbReference type="OrthoDB" id="9794876at2"/>
<dbReference type="Proteomes" id="UP000002440">
    <property type="component" value="Chromosome"/>
</dbReference>
<dbReference type="GO" id="GO:0003676">
    <property type="term" value="F:nucleic acid binding"/>
    <property type="evidence" value="ECO:0007669"/>
    <property type="project" value="InterPro"/>
</dbReference>
<dbReference type="CDD" id="cd20736">
    <property type="entry name" value="PoNe_Nuclease"/>
    <property type="match status" value="1"/>
</dbReference>
<dbReference type="Gene3D" id="3.40.1350.10">
    <property type="match status" value="1"/>
</dbReference>
<dbReference type="HAMAP" id="MF_00048">
    <property type="entry name" value="UPF0102"/>
    <property type="match status" value="1"/>
</dbReference>
<dbReference type="InterPro" id="IPR011335">
    <property type="entry name" value="Restrct_endonuc-II-like"/>
</dbReference>
<dbReference type="InterPro" id="IPR011856">
    <property type="entry name" value="tRNA_endonuc-like_dom_sf"/>
</dbReference>
<dbReference type="InterPro" id="IPR003509">
    <property type="entry name" value="UPF0102_YraN-like"/>
</dbReference>
<dbReference type="NCBIfam" id="NF009150">
    <property type="entry name" value="PRK12497.1-3"/>
    <property type="match status" value="1"/>
</dbReference>
<dbReference type="NCBIfam" id="TIGR00252">
    <property type="entry name" value="YraN family protein"/>
    <property type="match status" value="1"/>
</dbReference>
<dbReference type="PANTHER" id="PTHR34039">
    <property type="entry name" value="UPF0102 PROTEIN YRAN"/>
    <property type="match status" value="1"/>
</dbReference>
<dbReference type="PANTHER" id="PTHR34039:SF1">
    <property type="entry name" value="UPF0102 PROTEIN YRAN"/>
    <property type="match status" value="1"/>
</dbReference>
<dbReference type="Pfam" id="PF02021">
    <property type="entry name" value="UPF0102"/>
    <property type="match status" value="1"/>
</dbReference>
<dbReference type="SUPFAM" id="SSF52980">
    <property type="entry name" value="Restriction endonuclease-like"/>
    <property type="match status" value="1"/>
</dbReference>
<feature type="chain" id="PRO_0000336202" description="UPF0102 protein Mfla_2283">
    <location>
        <begin position="1"/>
        <end position="113"/>
    </location>
</feature>
<sequence>MKQLGDDAEALAERYLIKQGLVVIARNYRCRFGEIDLVMKQGATIVFVEVRMRSHATFGGAAASIHAAKRQKLILTAEHFLQRHGSAPCRFDAILLSKRDADGIEWIQDAFSA</sequence>
<keyword id="KW-1185">Reference proteome</keyword>
<gene>
    <name type="ordered locus">Mfla_2283</name>
</gene>
<reference key="1">
    <citation type="submission" date="2006-03" db="EMBL/GenBank/DDBJ databases">
        <title>Complete sequence of Methylobacillus flagellatus KT.</title>
        <authorList>
            <consortium name="US DOE Joint Genome Institute"/>
            <person name="Copeland A."/>
            <person name="Lucas S."/>
            <person name="Lapidus A."/>
            <person name="Barry K."/>
            <person name="Detter J.C."/>
            <person name="Glavina del Rio T."/>
            <person name="Hammon N."/>
            <person name="Israni S."/>
            <person name="Dalin E."/>
            <person name="Tice H."/>
            <person name="Pitluck S."/>
            <person name="Brettin T."/>
            <person name="Bruce D."/>
            <person name="Han C."/>
            <person name="Tapia R."/>
            <person name="Saunders E."/>
            <person name="Gilna P."/>
            <person name="Schmutz J."/>
            <person name="Larimer F."/>
            <person name="Land M."/>
            <person name="Kyrpides N."/>
            <person name="Anderson I."/>
            <person name="Richardson P."/>
        </authorList>
    </citation>
    <scope>NUCLEOTIDE SEQUENCE [LARGE SCALE GENOMIC DNA]</scope>
    <source>
        <strain>ATCC 51484 / DSM 6875 / VKM B-1610 / KT</strain>
    </source>
</reference>
<proteinExistence type="inferred from homology"/>
<comment type="similarity">
    <text evidence="1">Belongs to the UPF0102 family.</text>
</comment>